<comment type="function">
    <text evidence="3">Part of the ESX-1 / type VII specialized secretion system (T7SS), which exports several proteins including EsxA and EsxB (PubMed:18554329). Plays a role in DNA conjugation, in both donor and recipient strains (PubMed:18554329).</text>
</comment>
<comment type="subunit">
    <text evidence="1">Part of the ESX-1 / type VII secretion system (T7SS), which is composed of cytosolic and membrane components. The ESX-1 membrane complex is composed of EccB1, EccCa1, EccCb1, EccD1 and EccE1 (By similarity).</text>
</comment>
<comment type="subcellular location">
    <subcellularLocation>
        <location evidence="5">Cytoplasm</location>
    </subcellularLocation>
</comment>
<comment type="disruption phenotype">
    <text evidence="3">Loss of DNA conjugation when disrupted in recipient strain, strain does not secrete EsxB (PubMed:18554329).</text>
</comment>
<comment type="miscellaneous">
    <text evidence="6">DNA conjugation in M.smegmatis is unidirectional with distinct donor and recipient strains; mc(2)155 is a donor strain while MKD8 is a recipient strain. Mutations in a donor strain that alter DNA transfer do not always alter DNA transfer in a recipient strain.</text>
</comment>
<feature type="chain" id="PRO_0000438315" description="ESX-1 secretion system protein EccCb1">
    <location>
        <begin position="1"/>
        <end position="593"/>
    </location>
</feature>
<feature type="domain" description="FtsK 1" evidence="2">
    <location>
        <begin position="66"/>
        <end position="260"/>
    </location>
</feature>
<feature type="domain" description="FtsK 2" evidence="2">
    <location>
        <begin position="350"/>
        <end position="546"/>
    </location>
</feature>
<feature type="binding site" evidence="2">
    <location>
        <begin position="85"/>
        <end position="92"/>
    </location>
    <ligand>
        <name>ATP</name>
        <dbReference type="ChEBI" id="CHEBI:30616"/>
    </ligand>
</feature>
<feature type="binding site" evidence="2">
    <location>
        <begin position="377"/>
        <end position="384"/>
    </location>
    <ligand>
        <name>ATP</name>
        <dbReference type="ChEBI" id="CHEBI:30616"/>
    </ligand>
</feature>
<proteinExistence type="inferred from homology"/>
<dbReference type="EMBL" id="CP027541">
    <property type="protein sequence ID" value="AWT51053.1"/>
    <property type="molecule type" value="Genomic_DNA"/>
</dbReference>
<dbReference type="RefSeq" id="WP_003891389.1">
    <property type="nucleotide sequence ID" value="NZ_CP027541.1"/>
</dbReference>
<dbReference type="SMR" id="L8FPJ2"/>
<dbReference type="DIP" id="DIP-61400N"/>
<dbReference type="IntAct" id="L8FPJ2">
    <property type="interactions" value="1"/>
</dbReference>
<dbReference type="PATRIC" id="fig|1214915.3.peg.62"/>
<dbReference type="HOGENOM" id="CLU_003134_0_0_11"/>
<dbReference type="Proteomes" id="UP000011200">
    <property type="component" value="Chromosome"/>
</dbReference>
<dbReference type="GO" id="GO:0005737">
    <property type="term" value="C:cytoplasm"/>
    <property type="evidence" value="ECO:0007669"/>
    <property type="project" value="UniProtKB-SubCell"/>
</dbReference>
<dbReference type="GO" id="GO:0005524">
    <property type="term" value="F:ATP binding"/>
    <property type="evidence" value="ECO:0007669"/>
    <property type="project" value="UniProtKB-KW"/>
</dbReference>
<dbReference type="GO" id="GO:0016887">
    <property type="term" value="F:ATP hydrolysis activity"/>
    <property type="evidence" value="ECO:0007669"/>
    <property type="project" value="InterPro"/>
</dbReference>
<dbReference type="GO" id="GO:0003677">
    <property type="term" value="F:DNA binding"/>
    <property type="evidence" value="ECO:0007669"/>
    <property type="project" value="InterPro"/>
</dbReference>
<dbReference type="Gene3D" id="3.40.50.300">
    <property type="entry name" value="P-loop containing nucleotide triphosphate hydrolases"/>
    <property type="match status" value="2"/>
</dbReference>
<dbReference type="InterPro" id="IPR003593">
    <property type="entry name" value="AAA+_ATPase"/>
</dbReference>
<dbReference type="InterPro" id="IPR023837">
    <property type="entry name" value="EccCb-like_Actinobacteria"/>
</dbReference>
<dbReference type="InterPro" id="IPR050206">
    <property type="entry name" value="FtsK/SpoIIIE/SftA"/>
</dbReference>
<dbReference type="InterPro" id="IPR002543">
    <property type="entry name" value="FtsK_dom"/>
</dbReference>
<dbReference type="InterPro" id="IPR027417">
    <property type="entry name" value="P-loop_NTPase"/>
</dbReference>
<dbReference type="NCBIfam" id="TIGR03925">
    <property type="entry name" value="T7SS_EccC_b"/>
    <property type="match status" value="1"/>
</dbReference>
<dbReference type="PANTHER" id="PTHR22683">
    <property type="entry name" value="SPORULATION PROTEIN RELATED"/>
    <property type="match status" value="1"/>
</dbReference>
<dbReference type="PANTHER" id="PTHR22683:SF1">
    <property type="entry name" value="TYPE VII SECRETION SYSTEM PROTEIN ESSC"/>
    <property type="match status" value="1"/>
</dbReference>
<dbReference type="Pfam" id="PF01580">
    <property type="entry name" value="FtsK_SpoIIIE"/>
    <property type="match status" value="2"/>
</dbReference>
<dbReference type="SMART" id="SM00382">
    <property type="entry name" value="AAA"/>
    <property type="match status" value="2"/>
</dbReference>
<dbReference type="SUPFAM" id="SSF52540">
    <property type="entry name" value="P-loop containing nucleoside triphosphate hydrolases"/>
    <property type="match status" value="2"/>
</dbReference>
<dbReference type="PROSITE" id="PS50901">
    <property type="entry name" value="FTSK"/>
    <property type="match status" value="2"/>
</dbReference>
<evidence type="ECO:0000250" key="1">
    <source>
        <dbReference type="UniProtKB" id="P9WNB1"/>
    </source>
</evidence>
<evidence type="ECO:0000255" key="2">
    <source>
        <dbReference type="PROSITE-ProRule" id="PRU00289"/>
    </source>
</evidence>
<evidence type="ECO:0000269" key="3">
    <source>
    </source>
</evidence>
<evidence type="ECO:0000303" key="4">
    <source>
    </source>
</evidence>
<evidence type="ECO:0000305" key="5"/>
<evidence type="ECO:0000305" key="6">
    <source>
    </source>
</evidence>
<evidence type="ECO:0000312" key="7">
    <source>
        <dbReference type="EMBL" id="AWT51053.1"/>
    </source>
</evidence>
<name>ECC1B_MYCSE</name>
<accession>L8FPJ2</accession>
<accession>A0A2U9PH60</accession>
<sequence>MSTEAEPRVLREVVLSQLATGESRAYKMWLPPLTDPTPVNELVERDYQRRPLRFGLGIMDEPRRHRQEVWGVDVSAAGGNIAVGGAPQTGKSTFLQTLVVSAAATHTPRQVQFYCVDLGGGGLMYLEDLPHVGGVATRAEPDRVNRVVAEVKAVLRAREQVFKQYRVGSIASYREMRDDPSNPASQDPFGDVFLVIDGWPAFVAEFPDLEPAVQDIAGQGLAYGVHVIITTPRWTELKSRVRDYLGTKIEFRLGDVNETQIDRITREIPANRPGRAVSLEKHHLMMGVPRLDGVHSADNIVEAISSAVQQIAGRHTDQAPQVRVLPERIYLHQLDPNPPGPDSDYRTRWQVPLGVRESDLTVAYNQMHLTPHLLIFGAPKSGKTRIAHAVAQAICKRNSPQQVRFMLADYRSGLLDAVPQSHLLDAGAINRNSATLEEAIKALAVNLKKRLPPPDLTTAQLRARSWWSGPDVVLLVDDWHMVTAAAGMVSPMAPLGPLLPAAADIGLHVIVTCQMSMAHRATMDKFVGAAYGAGSPTLFLSGEKNDFPSRDIIVKKRPPGQAFLVGPDGKEVIQAAYVDPPEEEVFSPPSEGS</sequence>
<protein>
    <recommendedName>
        <fullName>ESX-1 secretion system protein EccCb1</fullName>
    </recommendedName>
</protein>
<gene>
    <name type="primary">eccCb1</name>
    <name evidence="4" type="ORF">0062</name>
    <name evidence="7" type="ORF">D806_000590</name>
    <name type="ORF">D806_0062</name>
</gene>
<organism>
    <name type="scientific">Mycolicibacterium smegmatis (strain MKD8)</name>
    <name type="common">Mycobacterium smegmatis</name>
    <dbReference type="NCBI Taxonomy" id="1214915"/>
    <lineage>
        <taxon>Bacteria</taxon>
        <taxon>Bacillati</taxon>
        <taxon>Actinomycetota</taxon>
        <taxon>Actinomycetes</taxon>
        <taxon>Mycobacteriales</taxon>
        <taxon>Mycobacteriaceae</taxon>
        <taxon>Mycolicibacterium</taxon>
    </lineage>
</organism>
<keyword id="KW-0067">ATP-binding</keyword>
<keyword id="KW-0963">Cytoplasm</keyword>
<keyword id="KW-0547">Nucleotide-binding</keyword>
<keyword id="KW-0677">Repeat</keyword>
<keyword id="KW-0813">Transport</keyword>
<reference key="1">
    <citation type="journal article" date="2013" name="Genome Announc.">
        <title>Draft genome sequence of MKD8, a conjugal recipient Mycobacterium smegmatis strain.</title>
        <authorList>
            <person name="Gray T.A."/>
            <person name="Palumbo M.J."/>
            <person name="Derbyshire K.M."/>
        </authorList>
    </citation>
    <scope>NUCLEOTIDE SEQUENCE [LARGE SCALE GENOMIC DNA]</scope>
    <source>
        <strain>MKD8</strain>
    </source>
</reference>
<reference key="2">
    <citation type="submission" date="2018-03" db="EMBL/GenBank/DDBJ databases">
        <authorList>
            <person name="Derbyshire K."/>
            <person name="Gray T.A."/>
            <person name="Champion M."/>
        </authorList>
    </citation>
    <scope>NUCLEOTIDE SEQUENCE [LARGE SCALE GENOMIC DNA]</scope>
    <source>
        <strain>MKD8</strain>
    </source>
</reference>
<reference key="3">
    <citation type="journal article" date="2008" name="Mol. Microbiol.">
        <title>The specialized secretory apparatus ESX-1 is essential for DNA transfer in Mycobacterium smegmatis.</title>
        <authorList>
            <person name="Coros A."/>
            <person name="Callahan B."/>
            <person name="Battaglioli E."/>
            <person name="Derbyshire K.M."/>
        </authorList>
    </citation>
    <scope>FUNCTION</scope>
    <scope>DISRUPTION PHENOTYPE</scope>
    <source>
        <strain>MKD8</strain>
    </source>
</reference>